<name>RSMC_ENT38</name>
<evidence type="ECO:0000255" key="1">
    <source>
        <dbReference type="HAMAP-Rule" id="MF_01862"/>
    </source>
</evidence>
<gene>
    <name evidence="1" type="primary">rsmC</name>
    <name type="ordered locus">Ent638_0530</name>
</gene>
<feature type="chain" id="PRO_0000369695" description="Ribosomal RNA small subunit methyltransferase C">
    <location>
        <begin position="1"/>
        <end position="342"/>
    </location>
</feature>
<comment type="function">
    <text evidence="1">Specifically methylates the guanine in position 1207 of 16S rRNA in the 30S particle.</text>
</comment>
<comment type="catalytic activity">
    <reaction evidence="1">
        <text>guanosine(1207) in 16S rRNA + S-adenosyl-L-methionine = N(2)-methylguanosine(1207) in 16S rRNA + S-adenosyl-L-homocysteine + H(+)</text>
        <dbReference type="Rhea" id="RHEA:42736"/>
        <dbReference type="Rhea" id="RHEA-COMP:10213"/>
        <dbReference type="Rhea" id="RHEA-COMP:10214"/>
        <dbReference type="ChEBI" id="CHEBI:15378"/>
        <dbReference type="ChEBI" id="CHEBI:57856"/>
        <dbReference type="ChEBI" id="CHEBI:59789"/>
        <dbReference type="ChEBI" id="CHEBI:74269"/>
        <dbReference type="ChEBI" id="CHEBI:74481"/>
        <dbReference type="EC" id="2.1.1.172"/>
    </reaction>
</comment>
<comment type="subunit">
    <text evidence="1">Monomer.</text>
</comment>
<comment type="subcellular location">
    <subcellularLocation>
        <location evidence="1">Cytoplasm</location>
    </subcellularLocation>
</comment>
<comment type="similarity">
    <text evidence="1">Belongs to the methyltransferase superfamily. RsmC family.</text>
</comment>
<organism>
    <name type="scientific">Enterobacter sp. (strain 638)</name>
    <dbReference type="NCBI Taxonomy" id="399742"/>
    <lineage>
        <taxon>Bacteria</taxon>
        <taxon>Pseudomonadati</taxon>
        <taxon>Pseudomonadota</taxon>
        <taxon>Gammaproteobacteria</taxon>
        <taxon>Enterobacterales</taxon>
        <taxon>Enterobacteriaceae</taxon>
        <taxon>Enterobacter</taxon>
    </lineage>
</organism>
<reference key="1">
    <citation type="journal article" date="2010" name="PLoS Genet.">
        <title>Genome sequence of the plant growth promoting endophytic bacterium Enterobacter sp. 638.</title>
        <authorList>
            <person name="Taghavi S."/>
            <person name="van der Lelie D."/>
            <person name="Hoffman A."/>
            <person name="Zhang Y.B."/>
            <person name="Walla M.D."/>
            <person name="Vangronsveld J."/>
            <person name="Newman L."/>
            <person name="Monchy S."/>
        </authorList>
    </citation>
    <scope>NUCLEOTIDE SEQUENCE [LARGE SCALE GENOMIC DNA]</scope>
    <source>
        <strain>638</strain>
    </source>
</reference>
<proteinExistence type="inferred from homology"/>
<sequence length="342" mass="37812">MSAFTPASEVLLRHSDDFEQSRILFAGDMQDDLPGRFECAASRAHTQQYHHWQLLSRQMEDRVRFSLVAEQSDVADCDTLIYYWPKNKPEAQFQLMNLLSMMPVGCDIFVVGENRSGVRSAESMLAEYATLNKIDSARRCGLYHGRLDKQPTFDAEKYWGEYQLDGLTIKTLPGVFSRDGLDVGSQLLLSTFTPHTKGKVLDVGCGAGVLSAVLASHSPKVRLTLSDVSAPAVEASRATLAANGLEGDVFASNVFSEVTGRFDIIISNPPFHDGMETSLEAAQTLIRGAVRHLGSGGELRIVANAFLPYPKLLDEIFGFHEVLAQTGRFKVYRTVMTRQAKK</sequence>
<accession>A4W687</accession>
<dbReference type="EC" id="2.1.1.172" evidence="1"/>
<dbReference type="EMBL" id="CP000653">
    <property type="protein sequence ID" value="ABP59217.1"/>
    <property type="molecule type" value="Genomic_DNA"/>
</dbReference>
<dbReference type="RefSeq" id="WP_012015940.1">
    <property type="nucleotide sequence ID" value="NC_009436.1"/>
</dbReference>
<dbReference type="SMR" id="A4W687"/>
<dbReference type="STRING" id="399742.Ent638_0530"/>
<dbReference type="KEGG" id="ent:Ent638_0530"/>
<dbReference type="eggNOG" id="COG2813">
    <property type="taxonomic scope" value="Bacteria"/>
</dbReference>
<dbReference type="HOGENOM" id="CLU_049581_0_1_6"/>
<dbReference type="OrthoDB" id="9816072at2"/>
<dbReference type="Proteomes" id="UP000000230">
    <property type="component" value="Chromosome"/>
</dbReference>
<dbReference type="GO" id="GO:0005737">
    <property type="term" value="C:cytoplasm"/>
    <property type="evidence" value="ECO:0007669"/>
    <property type="project" value="UniProtKB-SubCell"/>
</dbReference>
<dbReference type="GO" id="GO:0052914">
    <property type="term" value="F:16S rRNA (guanine(1207)-N(2))-methyltransferase activity"/>
    <property type="evidence" value="ECO:0007669"/>
    <property type="project" value="UniProtKB-EC"/>
</dbReference>
<dbReference type="GO" id="GO:0003676">
    <property type="term" value="F:nucleic acid binding"/>
    <property type="evidence" value="ECO:0007669"/>
    <property type="project" value="InterPro"/>
</dbReference>
<dbReference type="CDD" id="cd02440">
    <property type="entry name" value="AdoMet_MTases"/>
    <property type="match status" value="1"/>
</dbReference>
<dbReference type="Gene3D" id="3.40.50.150">
    <property type="entry name" value="Vaccinia Virus protein VP39"/>
    <property type="match status" value="2"/>
</dbReference>
<dbReference type="HAMAP" id="MF_01862">
    <property type="entry name" value="16SrRNA_methyltr_C"/>
    <property type="match status" value="1"/>
</dbReference>
<dbReference type="InterPro" id="IPR002052">
    <property type="entry name" value="DNA_methylase_N6_adenine_CS"/>
</dbReference>
<dbReference type="InterPro" id="IPR013675">
    <property type="entry name" value="Mtase_sm_N"/>
</dbReference>
<dbReference type="InterPro" id="IPR023543">
    <property type="entry name" value="rRNA_ssu_MeTfrase_C"/>
</dbReference>
<dbReference type="InterPro" id="IPR046977">
    <property type="entry name" value="RsmC/RlmG"/>
</dbReference>
<dbReference type="InterPro" id="IPR029063">
    <property type="entry name" value="SAM-dependent_MTases_sf"/>
</dbReference>
<dbReference type="InterPro" id="IPR007848">
    <property type="entry name" value="Small_mtfrase_dom"/>
</dbReference>
<dbReference type="NCBIfam" id="NF007023">
    <property type="entry name" value="PRK09489.1"/>
    <property type="match status" value="1"/>
</dbReference>
<dbReference type="PANTHER" id="PTHR47816">
    <property type="entry name" value="RIBOSOMAL RNA SMALL SUBUNIT METHYLTRANSFERASE C"/>
    <property type="match status" value="1"/>
</dbReference>
<dbReference type="PANTHER" id="PTHR47816:SF4">
    <property type="entry name" value="RIBOSOMAL RNA SMALL SUBUNIT METHYLTRANSFERASE C"/>
    <property type="match status" value="1"/>
</dbReference>
<dbReference type="Pfam" id="PF05175">
    <property type="entry name" value="MTS"/>
    <property type="match status" value="1"/>
</dbReference>
<dbReference type="Pfam" id="PF08468">
    <property type="entry name" value="MTS_N"/>
    <property type="match status" value="1"/>
</dbReference>
<dbReference type="SUPFAM" id="SSF53335">
    <property type="entry name" value="S-adenosyl-L-methionine-dependent methyltransferases"/>
    <property type="match status" value="1"/>
</dbReference>
<keyword id="KW-0963">Cytoplasm</keyword>
<keyword id="KW-0489">Methyltransferase</keyword>
<keyword id="KW-0698">rRNA processing</keyword>
<keyword id="KW-0949">S-adenosyl-L-methionine</keyword>
<keyword id="KW-0808">Transferase</keyword>
<protein>
    <recommendedName>
        <fullName evidence="1">Ribosomal RNA small subunit methyltransferase C</fullName>
        <ecNumber evidence="1">2.1.1.172</ecNumber>
    </recommendedName>
    <alternativeName>
        <fullName evidence="1">16S rRNA m2G1207 methyltransferase</fullName>
    </alternativeName>
    <alternativeName>
        <fullName evidence="1">rRNA (guanine-N(2)-)-methyltransferase RsmC</fullName>
    </alternativeName>
</protein>